<evidence type="ECO:0000255" key="1">
    <source>
        <dbReference type="HAMAP-Rule" id="MF_00005"/>
    </source>
</evidence>
<dbReference type="EC" id="6.3.4.5" evidence="1"/>
<dbReference type="EMBL" id="CP000453">
    <property type="protein sequence ID" value="ABI55955.1"/>
    <property type="molecule type" value="Genomic_DNA"/>
</dbReference>
<dbReference type="RefSeq" id="WP_011628350.1">
    <property type="nucleotide sequence ID" value="NC_008340.1"/>
</dbReference>
<dbReference type="SMR" id="Q0AB32"/>
<dbReference type="KEGG" id="aeh:Mlg_0601"/>
<dbReference type="eggNOG" id="COG0137">
    <property type="taxonomic scope" value="Bacteria"/>
</dbReference>
<dbReference type="HOGENOM" id="CLU_032784_4_2_6"/>
<dbReference type="OrthoDB" id="9801641at2"/>
<dbReference type="UniPathway" id="UPA00068">
    <property type="reaction ID" value="UER00113"/>
</dbReference>
<dbReference type="Proteomes" id="UP000001962">
    <property type="component" value="Chromosome"/>
</dbReference>
<dbReference type="GO" id="GO:0005737">
    <property type="term" value="C:cytoplasm"/>
    <property type="evidence" value="ECO:0007669"/>
    <property type="project" value="UniProtKB-SubCell"/>
</dbReference>
<dbReference type="GO" id="GO:0004055">
    <property type="term" value="F:argininosuccinate synthase activity"/>
    <property type="evidence" value="ECO:0007669"/>
    <property type="project" value="UniProtKB-UniRule"/>
</dbReference>
<dbReference type="GO" id="GO:0005524">
    <property type="term" value="F:ATP binding"/>
    <property type="evidence" value="ECO:0007669"/>
    <property type="project" value="UniProtKB-UniRule"/>
</dbReference>
<dbReference type="GO" id="GO:0000053">
    <property type="term" value="P:argininosuccinate metabolic process"/>
    <property type="evidence" value="ECO:0007669"/>
    <property type="project" value="TreeGrafter"/>
</dbReference>
<dbReference type="GO" id="GO:0006526">
    <property type="term" value="P:L-arginine biosynthetic process"/>
    <property type="evidence" value="ECO:0007669"/>
    <property type="project" value="UniProtKB-UniRule"/>
</dbReference>
<dbReference type="GO" id="GO:0000050">
    <property type="term" value="P:urea cycle"/>
    <property type="evidence" value="ECO:0007669"/>
    <property type="project" value="TreeGrafter"/>
</dbReference>
<dbReference type="CDD" id="cd01999">
    <property type="entry name" value="ASS"/>
    <property type="match status" value="1"/>
</dbReference>
<dbReference type="FunFam" id="3.40.50.620:FF:000019">
    <property type="entry name" value="Argininosuccinate synthase"/>
    <property type="match status" value="1"/>
</dbReference>
<dbReference type="FunFam" id="3.90.1260.10:FF:000007">
    <property type="entry name" value="Argininosuccinate synthase"/>
    <property type="match status" value="1"/>
</dbReference>
<dbReference type="Gene3D" id="3.90.1260.10">
    <property type="entry name" value="Argininosuccinate synthetase, chain A, domain 2"/>
    <property type="match status" value="1"/>
</dbReference>
<dbReference type="Gene3D" id="3.40.50.620">
    <property type="entry name" value="HUPs"/>
    <property type="match status" value="1"/>
</dbReference>
<dbReference type="Gene3D" id="1.20.5.470">
    <property type="entry name" value="Single helix bin"/>
    <property type="match status" value="1"/>
</dbReference>
<dbReference type="HAMAP" id="MF_00005">
    <property type="entry name" value="Arg_succ_synth_type1"/>
    <property type="match status" value="1"/>
</dbReference>
<dbReference type="InterPro" id="IPR048268">
    <property type="entry name" value="Arginosuc_syn_C"/>
</dbReference>
<dbReference type="InterPro" id="IPR048267">
    <property type="entry name" value="Arginosuc_syn_N"/>
</dbReference>
<dbReference type="InterPro" id="IPR001518">
    <property type="entry name" value="Arginosuc_synth"/>
</dbReference>
<dbReference type="InterPro" id="IPR018223">
    <property type="entry name" value="Arginosuc_synth_CS"/>
</dbReference>
<dbReference type="InterPro" id="IPR023434">
    <property type="entry name" value="Arginosuc_synth_type_1_subfam"/>
</dbReference>
<dbReference type="InterPro" id="IPR024074">
    <property type="entry name" value="AS_cat/multimer_dom_body"/>
</dbReference>
<dbReference type="InterPro" id="IPR014729">
    <property type="entry name" value="Rossmann-like_a/b/a_fold"/>
</dbReference>
<dbReference type="NCBIfam" id="TIGR00032">
    <property type="entry name" value="argG"/>
    <property type="match status" value="1"/>
</dbReference>
<dbReference type="NCBIfam" id="NF001770">
    <property type="entry name" value="PRK00509.1"/>
    <property type="match status" value="1"/>
</dbReference>
<dbReference type="PANTHER" id="PTHR11587">
    <property type="entry name" value="ARGININOSUCCINATE SYNTHASE"/>
    <property type="match status" value="1"/>
</dbReference>
<dbReference type="PANTHER" id="PTHR11587:SF2">
    <property type="entry name" value="ARGININOSUCCINATE SYNTHASE"/>
    <property type="match status" value="1"/>
</dbReference>
<dbReference type="Pfam" id="PF20979">
    <property type="entry name" value="Arginosuc_syn_C"/>
    <property type="match status" value="1"/>
</dbReference>
<dbReference type="Pfam" id="PF00764">
    <property type="entry name" value="Arginosuc_synth"/>
    <property type="match status" value="1"/>
</dbReference>
<dbReference type="SUPFAM" id="SSF52402">
    <property type="entry name" value="Adenine nucleotide alpha hydrolases-like"/>
    <property type="match status" value="1"/>
</dbReference>
<dbReference type="SUPFAM" id="SSF69864">
    <property type="entry name" value="Argininosuccinate synthetase, C-terminal domain"/>
    <property type="match status" value="1"/>
</dbReference>
<dbReference type="PROSITE" id="PS00564">
    <property type="entry name" value="ARGININOSUCCIN_SYN_1"/>
    <property type="match status" value="1"/>
</dbReference>
<dbReference type="PROSITE" id="PS00565">
    <property type="entry name" value="ARGININOSUCCIN_SYN_2"/>
    <property type="match status" value="1"/>
</dbReference>
<accession>Q0AB32</accession>
<sequence>MSDVKKVVLAYSGGLDTSVILQWLRETYDCEVVTFTADLGQGEELEPARKKAEAFGIKEIYIDDLREEFVRDFVFPMFRANAIYEGEYLLGTSIARPLIAKRQVEIARETGADAVSHGATGKGNDQVRFELGYYGLEPNIKVIAPWREWDLNSREKLLAYAEKHGISIEGKQSGGSPYSMDANLLHISYEGGVLEDTWTECEEAMWRWTRSPEAAPDEAQYIDIEFQGGDPVSIDGEKLSPAALLSRLNDLGAMHGVGRIDIVENRYVGMKSRGCYETPGGTILLRAHRAIESITLDRESAHLKDEVMPKYAELIYNGYWWSPEREAMQALIDATQRRVNGVVRLKLYKGNVIVVGRDSANDSLFDQTIATFEDDRGAYDQKDAEGFIRLNALRLRIAQRRG</sequence>
<protein>
    <recommendedName>
        <fullName evidence="1">Argininosuccinate synthase</fullName>
        <ecNumber evidence="1">6.3.4.5</ecNumber>
    </recommendedName>
    <alternativeName>
        <fullName evidence="1">Citrulline--aspartate ligase</fullName>
    </alternativeName>
</protein>
<name>ASSY_ALKEH</name>
<feature type="chain" id="PRO_0000263905" description="Argininosuccinate synthase">
    <location>
        <begin position="1"/>
        <end position="402"/>
    </location>
</feature>
<feature type="binding site" evidence="1">
    <location>
        <begin position="10"/>
        <end position="18"/>
    </location>
    <ligand>
        <name>ATP</name>
        <dbReference type="ChEBI" id="CHEBI:30616"/>
    </ligand>
</feature>
<feature type="binding site" evidence="1">
    <location>
        <position position="37"/>
    </location>
    <ligand>
        <name>ATP</name>
        <dbReference type="ChEBI" id="CHEBI:30616"/>
    </ligand>
</feature>
<feature type="binding site" evidence="1">
    <location>
        <position position="88"/>
    </location>
    <ligand>
        <name>L-citrulline</name>
        <dbReference type="ChEBI" id="CHEBI:57743"/>
    </ligand>
</feature>
<feature type="binding site" evidence="1">
    <location>
        <position position="93"/>
    </location>
    <ligand>
        <name>L-citrulline</name>
        <dbReference type="ChEBI" id="CHEBI:57743"/>
    </ligand>
</feature>
<feature type="binding site" evidence="1">
    <location>
        <position position="118"/>
    </location>
    <ligand>
        <name>ATP</name>
        <dbReference type="ChEBI" id="CHEBI:30616"/>
    </ligand>
</feature>
<feature type="binding site" evidence="1">
    <location>
        <position position="120"/>
    </location>
    <ligand>
        <name>L-aspartate</name>
        <dbReference type="ChEBI" id="CHEBI:29991"/>
    </ligand>
</feature>
<feature type="binding site" evidence="1">
    <location>
        <position position="124"/>
    </location>
    <ligand>
        <name>L-aspartate</name>
        <dbReference type="ChEBI" id="CHEBI:29991"/>
    </ligand>
</feature>
<feature type="binding site" evidence="1">
    <location>
        <position position="124"/>
    </location>
    <ligand>
        <name>L-citrulline</name>
        <dbReference type="ChEBI" id="CHEBI:57743"/>
    </ligand>
</feature>
<feature type="binding site" evidence="1">
    <location>
        <position position="125"/>
    </location>
    <ligand>
        <name>L-aspartate</name>
        <dbReference type="ChEBI" id="CHEBI:29991"/>
    </ligand>
</feature>
<feature type="binding site" evidence="1">
    <location>
        <position position="128"/>
    </location>
    <ligand>
        <name>L-citrulline</name>
        <dbReference type="ChEBI" id="CHEBI:57743"/>
    </ligand>
</feature>
<feature type="binding site" evidence="1">
    <location>
        <position position="179"/>
    </location>
    <ligand>
        <name>L-citrulline</name>
        <dbReference type="ChEBI" id="CHEBI:57743"/>
    </ligand>
</feature>
<feature type="binding site" evidence="1">
    <location>
        <position position="188"/>
    </location>
    <ligand>
        <name>L-citrulline</name>
        <dbReference type="ChEBI" id="CHEBI:57743"/>
    </ligand>
</feature>
<feature type="binding site" evidence="1">
    <location>
        <position position="264"/>
    </location>
    <ligand>
        <name>L-citrulline</name>
        <dbReference type="ChEBI" id="CHEBI:57743"/>
    </ligand>
</feature>
<feature type="binding site" evidence="1">
    <location>
        <position position="276"/>
    </location>
    <ligand>
        <name>L-citrulline</name>
        <dbReference type="ChEBI" id="CHEBI:57743"/>
    </ligand>
</feature>
<proteinExistence type="inferred from homology"/>
<organism>
    <name type="scientific">Alkalilimnicola ehrlichii (strain ATCC BAA-1101 / DSM 17681 / MLHE-1)</name>
    <dbReference type="NCBI Taxonomy" id="187272"/>
    <lineage>
        <taxon>Bacteria</taxon>
        <taxon>Pseudomonadati</taxon>
        <taxon>Pseudomonadota</taxon>
        <taxon>Gammaproteobacteria</taxon>
        <taxon>Chromatiales</taxon>
        <taxon>Ectothiorhodospiraceae</taxon>
        <taxon>Alkalilimnicola</taxon>
    </lineage>
</organism>
<gene>
    <name evidence="1" type="primary">argG</name>
    <name type="ordered locus">Mlg_0601</name>
</gene>
<reference key="1">
    <citation type="submission" date="2006-08" db="EMBL/GenBank/DDBJ databases">
        <title>Complete sequence of Alkalilimnicola ehrilichei MLHE-1.</title>
        <authorList>
            <person name="Copeland A."/>
            <person name="Lucas S."/>
            <person name="Lapidus A."/>
            <person name="Barry K."/>
            <person name="Detter J.C."/>
            <person name="Glavina del Rio T."/>
            <person name="Hammon N."/>
            <person name="Israni S."/>
            <person name="Dalin E."/>
            <person name="Tice H."/>
            <person name="Pitluck S."/>
            <person name="Sims D."/>
            <person name="Brettin T."/>
            <person name="Bruce D."/>
            <person name="Han C."/>
            <person name="Tapia R."/>
            <person name="Gilna P."/>
            <person name="Schmutz J."/>
            <person name="Larimer F."/>
            <person name="Land M."/>
            <person name="Hauser L."/>
            <person name="Kyrpides N."/>
            <person name="Mikhailova N."/>
            <person name="Oremland R.S."/>
            <person name="Hoeft S.E."/>
            <person name="Switzer-Blum J."/>
            <person name="Kulp T."/>
            <person name="King G."/>
            <person name="Tabita R."/>
            <person name="Witte B."/>
            <person name="Santini J.M."/>
            <person name="Basu P."/>
            <person name="Hollibaugh J.T."/>
            <person name="Xie G."/>
            <person name="Stolz J.F."/>
            <person name="Richardson P."/>
        </authorList>
    </citation>
    <scope>NUCLEOTIDE SEQUENCE [LARGE SCALE GENOMIC DNA]</scope>
    <source>
        <strain>ATCC BAA-1101 / DSM 17681 / MLHE-1</strain>
    </source>
</reference>
<comment type="catalytic activity">
    <reaction evidence="1">
        <text>L-citrulline + L-aspartate + ATP = 2-(N(omega)-L-arginino)succinate + AMP + diphosphate + H(+)</text>
        <dbReference type="Rhea" id="RHEA:10932"/>
        <dbReference type="ChEBI" id="CHEBI:15378"/>
        <dbReference type="ChEBI" id="CHEBI:29991"/>
        <dbReference type="ChEBI" id="CHEBI:30616"/>
        <dbReference type="ChEBI" id="CHEBI:33019"/>
        <dbReference type="ChEBI" id="CHEBI:57472"/>
        <dbReference type="ChEBI" id="CHEBI:57743"/>
        <dbReference type="ChEBI" id="CHEBI:456215"/>
        <dbReference type="EC" id="6.3.4.5"/>
    </reaction>
</comment>
<comment type="pathway">
    <text evidence="1">Amino-acid biosynthesis; L-arginine biosynthesis; L-arginine from L-ornithine and carbamoyl phosphate: step 2/3.</text>
</comment>
<comment type="subunit">
    <text evidence="1">Homotetramer.</text>
</comment>
<comment type="subcellular location">
    <subcellularLocation>
        <location evidence="1">Cytoplasm</location>
    </subcellularLocation>
</comment>
<comment type="similarity">
    <text evidence="1">Belongs to the argininosuccinate synthase family. Type 1 subfamily.</text>
</comment>
<keyword id="KW-0028">Amino-acid biosynthesis</keyword>
<keyword id="KW-0055">Arginine biosynthesis</keyword>
<keyword id="KW-0067">ATP-binding</keyword>
<keyword id="KW-0963">Cytoplasm</keyword>
<keyword id="KW-0436">Ligase</keyword>
<keyword id="KW-0547">Nucleotide-binding</keyword>
<keyword id="KW-1185">Reference proteome</keyword>